<keyword id="KW-0007">Acetylation</keyword>
<keyword id="KW-0158">Chromosome</keyword>
<keyword id="KW-0963">Cytoplasm</keyword>
<keyword id="KW-0238">DNA-binding</keyword>
<keyword id="KW-0539">Nucleus</keyword>
<keyword id="KW-0597">Phosphoprotein</keyword>
<keyword id="KW-1185">Reference proteome</keyword>
<reference key="1">
    <citation type="journal article" date="1998" name="Proc. Natl. Acad. Sci. U.S.A.">
        <title>A previously unidentified host protein protects retroviral DNA from autointegration.</title>
        <authorList>
            <person name="Lee M.S."/>
            <person name="Craigie R."/>
        </authorList>
    </citation>
    <scope>NUCLEOTIDE SEQUENCE [MRNA]</scope>
</reference>
<reference key="2">
    <citation type="journal article" date="1999" name="J. Cell Sci.">
        <title>LAP2 binding protein 1 (L2BP1/BAF) is a candidate mediator of LAP2-chromatin interaction.</title>
        <authorList>
            <person name="Furukawa K."/>
        </authorList>
    </citation>
    <scope>NUCLEOTIDE SEQUENCE [MRNA]</scope>
    <scope>INTERACTION WITH TMPO</scope>
</reference>
<reference key="3">
    <citation type="journal article" date="2005" name="Science">
        <title>The transcriptional landscape of the mammalian genome.</title>
        <authorList>
            <person name="Carninci P."/>
            <person name="Kasukawa T."/>
            <person name="Katayama S."/>
            <person name="Gough J."/>
            <person name="Frith M.C."/>
            <person name="Maeda N."/>
            <person name="Oyama R."/>
            <person name="Ravasi T."/>
            <person name="Lenhard B."/>
            <person name="Wells C."/>
            <person name="Kodzius R."/>
            <person name="Shimokawa K."/>
            <person name="Bajic V.B."/>
            <person name="Brenner S.E."/>
            <person name="Batalov S."/>
            <person name="Forrest A.R."/>
            <person name="Zavolan M."/>
            <person name="Davis M.J."/>
            <person name="Wilming L.G."/>
            <person name="Aidinis V."/>
            <person name="Allen J.E."/>
            <person name="Ambesi-Impiombato A."/>
            <person name="Apweiler R."/>
            <person name="Aturaliya R.N."/>
            <person name="Bailey T.L."/>
            <person name="Bansal M."/>
            <person name="Baxter L."/>
            <person name="Beisel K.W."/>
            <person name="Bersano T."/>
            <person name="Bono H."/>
            <person name="Chalk A.M."/>
            <person name="Chiu K.P."/>
            <person name="Choudhary V."/>
            <person name="Christoffels A."/>
            <person name="Clutterbuck D.R."/>
            <person name="Crowe M.L."/>
            <person name="Dalla E."/>
            <person name="Dalrymple B.P."/>
            <person name="de Bono B."/>
            <person name="Della Gatta G."/>
            <person name="di Bernardo D."/>
            <person name="Down T."/>
            <person name="Engstrom P."/>
            <person name="Fagiolini M."/>
            <person name="Faulkner G."/>
            <person name="Fletcher C.F."/>
            <person name="Fukushima T."/>
            <person name="Furuno M."/>
            <person name="Futaki S."/>
            <person name="Gariboldi M."/>
            <person name="Georgii-Hemming P."/>
            <person name="Gingeras T.R."/>
            <person name="Gojobori T."/>
            <person name="Green R.E."/>
            <person name="Gustincich S."/>
            <person name="Harbers M."/>
            <person name="Hayashi Y."/>
            <person name="Hensch T.K."/>
            <person name="Hirokawa N."/>
            <person name="Hill D."/>
            <person name="Huminiecki L."/>
            <person name="Iacono M."/>
            <person name="Ikeo K."/>
            <person name="Iwama A."/>
            <person name="Ishikawa T."/>
            <person name="Jakt M."/>
            <person name="Kanapin A."/>
            <person name="Katoh M."/>
            <person name="Kawasawa Y."/>
            <person name="Kelso J."/>
            <person name="Kitamura H."/>
            <person name="Kitano H."/>
            <person name="Kollias G."/>
            <person name="Krishnan S.P."/>
            <person name="Kruger A."/>
            <person name="Kummerfeld S.K."/>
            <person name="Kurochkin I.V."/>
            <person name="Lareau L.F."/>
            <person name="Lazarevic D."/>
            <person name="Lipovich L."/>
            <person name="Liu J."/>
            <person name="Liuni S."/>
            <person name="McWilliam S."/>
            <person name="Madan Babu M."/>
            <person name="Madera M."/>
            <person name="Marchionni L."/>
            <person name="Matsuda H."/>
            <person name="Matsuzawa S."/>
            <person name="Miki H."/>
            <person name="Mignone F."/>
            <person name="Miyake S."/>
            <person name="Morris K."/>
            <person name="Mottagui-Tabar S."/>
            <person name="Mulder N."/>
            <person name="Nakano N."/>
            <person name="Nakauchi H."/>
            <person name="Ng P."/>
            <person name="Nilsson R."/>
            <person name="Nishiguchi S."/>
            <person name="Nishikawa S."/>
            <person name="Nori F."/>
            <person name="Ohara O."/>
            <person name="Okazaki Y."/>
            <person name="Orlando V."/>
            <person name="Pang K.C."/>
            <person name="Pavan W.J."/>
            <person name="Pavesi G."/>
            <person name="Pesole G."/>
            <person name="Petrovsky N."/>
            <person name="Piazza S."/>
            <person name="Reed J."/>
            <person name="Reid J.F."/>
            <person name="Ring B.Z."/>
            <person name="Ringwald M."/>
            <person name="Rost B."/>
            <person name="Ruan Y."/>
            <person name="Salzberg S.L."/>
            <person name="Sandelin A."/>
            <person name="Schneider C."/>
            <person name="Schoenbach C."/>
            <person name="Sekiguchi K."/>
            <person name="Semple C.A."/>
            <person name="Seno S."/>
            <person name="Sessa L."/>
            <person name="Sheng Y."/>
            <person name="Shibata Y."/>
            <person name="Shimada H."/>
            <person name="Shimada K."/>
            <person name="Silva D."/>
            <person name="Sinclair B."/>
            <person name="Sperling S."/>
            <person name="Stupka E."/>
            <person name="Sugiura K."/>
            <person name="Sultana R."/>
            <person name="Takenaka Y."/>
            <person name="Taki K."/>
            <person name="Tammoja K."/>
            <person name="Tan S.L."/>
            <person name="Tang S."/>
            <person name="Taylor M.S."/>
            <person name="Tegner J."/>
            <person name="Teichmann S.A."/>
            <person name="Ueda H.R."/>
            <person name="van Nimwegen E."/>
            <person name="Verardo R."/>
            <person name="Wei C.L."/>
            <person name="Yagi K."/>
            <person name="Yamanishi H."/>
            <person name="Zabarovsky E."/>
            <person name="Zhu S."/>
            <person name="Zimmer A."/>
            <person name="Hide W."/>
            <person name="Bult C."/>
            <person name="Grimmond S.M."/>
            <person name="Teasdale R.D."/>
            <person name="Liu E.T."/>
            <person name="Brusic V."/>
            <person name="Quackenbush J."/>
            <person name="Wahlestedt C."/>
            <person name="Mattick J.S."/>
            <person name="Hume D.A."/>
            <person name="Kai C."/>
            <person name="Sasaki D."/>
            <person name="Tomaru Y."/>
            <person name="Fukuda S."/>
            <person name="Kanamori-Katayama M."/>
            <person name="Suzuki M."/>
            <person name="Aoki J."/>
            <person name="Arakawa T."/>
            <person name="Iida J."/>
            <person name="Imamura K."/>
            <person name="Itoh M."/>
            <person name="Kato T."/>
            <person name="Kawaji H."/>
            <person name="Kawagashira N."/>
            <person name="Kawashima T."/>
            <person name="Kojima M."/>
            <person name="Kondo S."/>
            <person name="Konno H."/>
            <person name="Nakano K."/>
            <person name="Ninomiya N."/>
            <person name="Nishio T."/>
            <person name="Okada M."/>
            <person name="Plessy C."/>
            <person name="Shibata K."/>
            <person name="Shiraki T."/>
            <person name="Suzuki S."/>
            <person name="Tagami M."/>
            <person name="Waki K."/>
            <person name="Watahiki A."/>
            <person name="Okamura-Oho Y."/>
            <person name="Suzuki H."/>
            <person name="Kawai J."/>
            <person name="Hayashizaki Y."/>
        </authorList>
    </citation>
    <scope>NUCLEOTIDE SEQUENCE [LARGE SCALE MRNA]</scope>
    <source>
        <strain>C57BL/6J</strain>
        <strain>NOD</strain>
        <tissue>Liver</tissue>
        <tissue>Thymus</tissue>
    </source>
</reference>
<reference key="4">
    <citation type="journal article" date="2004" name="Genome Res.">
        <title>The status, quality, and expansion of the NIH full-length cDNA project: the Mammalian Gene Collection (MGC).</title>
        <authorList>
            <consortium name="The MGC Project Team"/>
        </authorList>
    </citation>
    <scope>NUCLEOTIDE SEQUENCE [LARGE SCALE MRNA]</scope>
</reference>
<reference key="5">
    <citation type="journal article" date="2009" name="Mol. Cell. Proteomics">
        <title>Large scale localization of protein phosphorylation by use of electron capture dissociation mass spectrometry.</title>
        <authorList>
            <person name="Sweet S.M."/>
            <person name="Bailey C.M."/>
            <person name="Cunningham D.L."/>
            <person name="Heath J.K."/>
            <person name="Cooper H.J."/>
        </authorList>
    </citation>
    <scope>IDENTIFICATION BY MASS SPECTROMETRY [LARGE SCALE ANALYSIS]</scope>
    <source>
        <tissue>Embryonic fibroblast</tissue>
    </source>
</reference>
<reference key="6">
    <citation type="journal article" date="2010" name="Cell">
        <title>A tissue-specific atlas of mouse protein phosphorylation and expression.</title>
        <authorList>
            <person name="Huttlin E.L."/>
            <person name="Jedrychowski M.P."/>
            <person name="Elias J.E."/>
            <person name="Goswami T."/>
            <person name="Rad R."/>
            <person name="Beausoleil S.A."/>
            <person name="Villen J."/>
            <person name="Haas W."/>
            <person name="Sowa M.E."/>
            <person name="Gygi S.P."/>
        </authorList>
    </citation>
    <scope>IDENTIFICATION BY MASS SPECTROMETRY [LARGE SCALE ANALYSIS]</scope>
    <source>
        <tissue>Heart</tissue>
        <tissue>Lung</tissue>
        <tissue>Testis</tissue>
    </source>
</reference>
<reference key="7">
    <citation type="journal article" date="2020" name="MBio">
        <title>Barrier-to-autointegration factor 1 protects against a basal cGAS-STING response.</title>
        <authorList>
            <person name="Ma H."/>
            <person name="Qian W."/>
            <person name="Bambouskova M."/>
            <person name="Collins P.L."/>
            <person name="Porter S.I."/>
            <person name="Byrum A.K."/>
            <person name="Zhang R."/>
            <person name="Artyomov M."/>
            <person name="Oltz E.M."/>
            <person name="Mosammaparast N."/>
            <person name="Miner J.J."/>
            <person name="Diamond M.S."/>
        </authorList>
    </citation>
    <scope>FUNCTION</scope>
</reference>
<name>BAF_MOUSE</name>
<comment type="function">
    <text evidence="1 2">Non-specific DNA-binding protein that plays key roles in mitotic nuclear reassembly, chromatin organization, DNA damage response, gene expression and intrinsic immunity against foreign DNA (By similarity). Contains two non-specific double-stranded DNA (dsDNA)-binding sites which promote DNA cross-bridging (By similarity). Plays a key role in nuclear membrane reformation at the end of mitosis by driving formation of a single nucleus in a spindle-independent manner (By similarity). Transiently cross-bridges anaphase chromosomes via its ability to bridge distant DNA sites, leading to the formation of a dense chromatin network at the chromosome ensemble surface that limits membranes to the surface (By similarity). Also acts as a negative regulator of innate immune activation by restricting CGAS activity toward self-DNA upon acute loss of nuclear membrane integrity (PubMed:32156810). Outcompetes CGAS for DNA-binding, thereby preventing CGAS activation and subsequent damaging autoinflammatory responses (By similarity). Also involved in DNA damage response: interacts with PARP1 in response to oxidative stress, thereby inhibiting the ADP-ribosyltransferase activity of PARP1 (By similarity). Involved in the recognition of exogenous dsDNA in the cytosol: associates with exogenous dsDNA immediately after its appearance in the cytosol at endosome breakdown and is required to avoid autophagy (By similarity).</text>
</comment>
<comment type="subunit">
    <text evidence="1">Homodimer. Heterodimerizes with BANF2. Interacts with ANKLE2/LEM4, leading to decreased phosphorylation by VRK1 and promoting dephosphorylation by protein phosphatase 2A (PP2A). Binds non-specifically to double-stranded DNA, and is found as a hexamer or dodecamer upon DNA binding. Binds to LEM domain-containing nuclear proteins such as LEMD3/MAN1, TMPO/LAP2 and EMD (emerin). Interacts with ANKLE1 (via LEM domain); the interaction may favor BANF1 dimerization. Interacts with CRX and LMNA (lamin-A). Binds linker histone H1.1 and core histones H3. Interacts with LEMD2 (via LEM domain). Interacts with PARP1; interaction takes place in response to oxidative DNA damage.</text>
</comment>
<comment type="subcellular location">
    <subcellularLocation>
        <location evidence="1">Nucleus</location>
    </subcellularLocation>
    <subcellularLocation>
        <location evidence="1">Chromosome</location>
    </subcellularLocation>
    <subcellularLocation>
        <location evidence="1">Nucleus envelope</location>
    </subcellularLocation>
    <subcellularLocation>
        <location evidence="1">Cytoplasm</location>
    </subcellularLocation>
    <text evidence="1">Significantly enriched at the nuclear inner membrane, diffusely throughout the nucleus during interphase and concentrated at the chromosomes during the M-phase. The phosphorylated form (by VRK1) shows a cytoplasmic localization whereas the unphosphorylated form locates almost exclusively in the nucleus. May be included in HIV-1 virions via its interaction with viral GAG polyprotein.</text>
</comment>
<comment type="domain">
    <text evidence="1">Has a helix-hairpin-helix (HhH) structural motif conserved among proteins that bind non-specifically to DNA.</text>
</comment>
<comment type="domain">
    <text evidence="1">LEM domain proteins bind centrally on the BAF dimer.</text>
</comment>
<comment type="PTM">
    <text evidence="1">Ser-4 is the major site of phosphorylation as compared to Thr-2 and Thr-3. Phosphorylation on Thr-2; Thr-3 and Ser-4 disrupts its ability to bind DNA and reduces its ability to bind LEM domain-containing proteins. Non phosphorylated BAF seems to enhance binding between EMD and LMNA. Dephosphorylated by protein phosphatase 2A (PP2A) following interaction with ANKLE2/LEM4 during mitotic exit, leading to mitotic nuclear envelope reassembly.</text>
</comment>
<comment type="similarity">
    <text evidence="5">Belongs to the BAF family.</text>
</comment>
<organism>
    <name type="scientific">Mus musculus</name>
    <name type="common">Mouse</name>
    <dbReference type="NCBI Taxonomy" id="10090"/>
    <lineage>
        <taxon>Eukaryota</taxon>
        <taxon>Metazoa</taxon>
        <taxon>Chordata</taxon>
        <taxon>Craniata</taxon>
        <taxon>Vertebrata</taxon>
        <taxon>Euteleostomi</taxon>
        <taxon>Mammalia</taxon>
        <taxon>Eutheria</taxon>
        <taxon>Euarchontoglires</taxon>
        <taxon>Glires</taxon>
        <taxon>Rodentia</taxon>
        <taxon>Myomorpha</taxon>
        <taxon>Muroidea</taxon>
        <taxon>Muridae</taxon>
        <taxon>Murinae</taxon>
        <taxon>Mus</taxon>
        <taxon>Mus</taxon>
    </lineage>
</organism>
<proteinExistence type="evidence at protein level"/>
<sequence length="89" mass="10103">MTTSQKHRDFVAEPMGEKPVGSLAGIGDVLSKRLEERGFDKAYVVLGQFLVLKKDEDLFREWLKDTCGANAKQSRDCFGCLREWCDAFL</sequence>
<accession>O54962</accession>
<accession>Q542E6</accession>
<gene>
    <name evidence="6" type="primary">Banf1</name>
    <name evidence="4" type="synonym">Baf</name>
    <name evidence="3" type="synonym">L2bp1</name>
</gene>
<dbReference type="EMBL" id="AF037080">
    <property type="protein sequence ID" value="AAC40032.1"/>
    <property type="molecule type" value="mRNA"/>
</dbReference>
<dbReference type="EMBL" id="AB025349">
    <property type="protein sequence ID" value="BAA83102.1"/>
    <property type="molecule type" value="mRNA"/>
</dbReference>
<dbReference type="EMBL" id="AK003025">
    <property type="protein sequence ID" value="BAB22518.1"/>
    <property type="molecule type" value="mRNA"/>
</dbReference>
<dbReference type="EMBL" id="AK004212">
    <property type="protein sequence ID" value="BAB23223.1"/>
    <property type="molecule type" value="mRNA"/>
</dbReference>
<dbReference type="EMBL" id="AK010257">
    <property type="protein sequence ID" value="BAB26800.1"/>
    <property type="molecule type" value="mRNA"/>
</dbReference>
<dbReference type="EMBL" id="AK011079">
    <property type="protein sequence ID" value="BAB27383.1"/>
    <property type="molecule type" value="mRNA"/>
</dbReference>
<dbReference type="EMBL" id="AK011100">
    <property type="protein sequence ID" value="BAB27397.1"/>
    <property type="molecule type" value="mRNA"/>
</dbReference>
<dbReference type="EMBL" id="AK012588">
    <property type="protein sequence ID" value="BAB28337.1"/>
    <property type="molecule type" value="mRNA"/>
</dbReference>
<dbReference type="EMBL" id="AK088896">
    <property type="protein sequence ID" value="BAC40639.1"/>
    <property type="molecule type" value="mRNA"/>
</dbReference>
<dbReference type="EMBL" id="BC003709">
    <property type="protein sequence ID" value="AAH03709.1"/>
    <property type="molecule type" value="mRNA"/>
</dbReference>
<dbReference type="CCDS" id="CCDS29458.1"/>
<dbReference type="RefSeq" id="NP_001033320.1">
    <property type="nucleotide sequence ID" value="NM_001038231.2"/>
</dbReference>
<dbReference type="RefSeq" id="NP_001273537.1">
    <property type="nucleotide sequence ID" value="NM_001286608.1"/>
</dbReference>
<dbReference type="RefSeq" id="NP_035923.1">
    <property type="nucleotide sequence ID" value="NM_011793.3"/>
</dbReference>
<dbReference type="SMR" id="O54962"/>
<dbReference type="BioGRID" id="204742">
    <property type="interactions" value="18"/>
</dbReference>
<dbReference type="FunCoup" id="O54962">
    <property type="interactions" value="3521"/>
</dbReference>
<dbReference type="IntAct" id="O54962">
    <property type="interactions" value="3"/>
</dbReference>
<dbReference type="MINT" id="O54962"/>
<dbReference type="STRING" id="10090.ENSMUSP00000025762"/>
<dbReference type="iPTMnet" id="O54962"/>
<dbReference type="PhosphoSitePlus" id="O54962"/>
<dbReference type="jPOST" id="O54962"/>
<dbReference type="PaxDb" id="10090-ENSMUSP00000126202"/>
<dbReference type="PeptideAtlas" id="O54962"/>
<dbReference type="ProteomicsDB" id="273534"/>
<dbReference type="Pumba" id="O54962"/>
<dbReference type="TopDownProteomics" id="O54962"/>
<dbReference type="Antibodypedia" id="30040">
    <property type="antibodies" value="271 antibodies from 29 providers"/>
</dbReference>
<dbReference type="DNASU" id="23825"/>
<dbReference type="Ensembl" id="ENSMUST00000025762.16">
    <property type="protein sequence ID" value="ENSMUSP00000025762.9"/>
    <property type="gene ID" value="ENSMUSG00000024844.16"/>
</dbReference>
<dbReference type="Ensembl" id="ENSMUST00000170010.3">
    <property type="protein sequence ID" value="ENSMUSP00000126202.2"/>
    <property type="gene ID" value="ENSMUSG00000024844.16"/>
</dbReference>
<dbReference type="Ensembl" id="ENSMUST00000237167.2">
    <property type="protein sequence ID" value="ENSMUSP00000158117.2"/>
    <property type="gene ID" value="ENSMUSG00000024844.16"/>
</dbReference>
<dbReference type="GeneID" id="23825"/>
<dbReference type="KEGG" id="mmu:23825"/>
<dbReference type="UCSC" id="uc008gcr.2">
    <property type="organism name" value="mouse"/>
</dbReference>
<dbReference type="AGR" id="MGI:1346330"/>
<dbReference type="CTD" id="8815"/>
<dbReference type="MGI" id="MGI:1346330">
    <property type="gene designation" value="Banf1"/>
</dbReference>
<dbReference type="VEuPathDB" id="HostDB:ENSMUSG00000024844"/>
<dbReference type="eggNOG" id="KOG4233">
    <property type="taxonomic scope" value="Eukaryota"/>
</dbReference>
<dbReference type="GeneTree" id="ENSGT00390000018613"/>
<dbReference type="HOGENOM" id="CLU_167806_0_0_1"/>
<dbReference type="InParanoid" id="O54962"/>
<dbReference type="OMA" id="SKQQGDC"/>
<dbReference type="OrthoDB" id="9997163at2759"/>
<dbReference type="PhylomeDB" id="O54962"/>
<dbReference type="TreeFam" id="TF315060"/>
<dbReference type="Reactome" id="R-MMU-2980766">
    <property type="pathway name" value="Nuclear Envelope Breakdown"/>
</dbReference>
<dbReference type="Reactome" id="R-MMU-2995383">
    <property type="pathway name" value="Initiation of Nuclear Envelope (NE) Reformation"/>
</dbReference>
<dbReference type="BioGRID-ORCS" id="23825">
    <property type="hits" value="28 hits in 77 CRISPR screens"/>
</dbReference>
<dbReference type="ChiTaRS" id="Banf1">
    <property type="organism name" value="mouse"/>
</dbReference>
<dbReference type="PRO" id="PR:O54962"/>
<dbReference type="Proteomes" id="UP000000589">
    <property type="component" value="Chromosome 19"/>
</dbReference>
<dbReference type="RNAct" id="O54962">
    <property type="molecule type" value="protein"/>
</dbReference>
<dbReference type="Bgee" id="ENSMUSG00000024844">
    <property type="expression patterns" value="Expressed in somite and 263 other cell types or tissues"/>
</dbReference>
<dbReference type="GO" id="GO:0000785">
    <property type="term" value="C:chromatin"/>
    <property type="evidence" value="ECO:0000250"/>
    <property type="project" value="UniProtKB"/>
</dbReference>
<dbReference type="GO" id="GO:0000793">
    <property type="term" value="C:condensed chromosome"/>
    <property type="evidence" value="ECO:0007669"/>
    <property type="project" value="Ensembl"/>
</dbReference>
<dbReference type="GO" id="GO:0005829">
    <property type="term" value="C:cytosol"/>
    <property type="evidence" value="ECO:0007669"/>
    <property type="project" value="Ensembl"/>
</dbReference>
<dbReference type="GO" id="GO:0005635">
    <property type="term" value="C:nuclear envelope"/>
    <property type="evidence" value="ECO:0007669"/>
    <property type="project" value="UniProtKB-SubCell"/>
</dbReference>
<dbReference type="GO" id="GO:0005654">
    <property type="term" value="C:nucleoplasm"/>
    <property type="evidence" value="ECO:0007669"/>
    <property type="project" value="Ensembl"/>
</dbReference>
<dbReference type="GO" id="GO:0003677">
    <property type="term" value="F:DNA binding"/>
    <property type="evidence" value="ECO:0000314"/>
    <property type="project" value="MGI"/>
</dbReference>
<dbReference type="GO" id="GO:0003690">
    <property type="term" value="F:double-stranded DNA binding"/>
    <property type="evidence" value="ECO:0007669"/>
    <property type="project" value="Ensembl"/>
</dbReference>
<dbReference type="GO" id="GO:0042803">
    <property type="term" value="F:protein homodimerization activity"/>
    <property type="evidence" value="ECO:0007669"/>
    <property type="project" value="Ensembl"/>
</dbReference>
<dbReference type="GO" id="GO:0006325">
    <property type="term" value="P:chromatin organization"/>
    <property type="evidence" value="ECO:0000250"/>
    <property type="project" value="UniProtKB"/>
</dbReference>
<dbReference type="GO" id="GO:0015074">
    <property type="term" value="P:DNA integration"/>
    <property type="evidence" value="ECO:0000314"/>
    <property type="project" value="MGI"/>
</dbReference>
<dbReference type="GO" id="GO:0075713">
    <property type="term" value="P:establishment of integrated proviral latency"/>
    <property type="evidence" value="ECO:0000304"/>
    <property type="project" value="MGI"/>
</dbReference>
<dbReference type="GO" id="GO:0007084">
    <property type="term" value="P:mitotic nuclear membrane reassembly"/>
    <property type="evidence" value="ECO:0000250"/>
    <property type="project" value="UniProtKB"/>
</dbReference>
<dbReference type="GO" id="GO:0160049">
    <property type="term" value="P:negative regulation of cGAS/STING signaling pathway"/>
    <property type="evidence" value="ECO:0007669"/>
    <property type="project" value="Ensembl"/>
</dbReference>
<dbReference type="GO" id="GO:0045824">
    <property type="term" value="P:negative regulation of innate immune response"/>
    <property type="evidence" value="ECO:0007669"/>
    <property type="project" value="Ensembl"/>
</dbReference>
<dbReference type="GO" id="GO:0010836">
    <property type="term" value="P:negative regulation of protein ADP-ribosylation"/>
    <property type="evidence" value="ECO:0000250"/>
    <property type="project" value="UniProtKB"/>
</dbReference>
<dbReference type="GO" id="GO:0032480">
    <property type="term" value="P:negative regulation of type I interferon production"/>
    <property type="evidence" value="ECO:0000250"/>
    <property type="project" value="UniProtKB"/>
</dbReference>
<dbReference type="GO" id="GO:0045071">
    <property type="term" value="P:negative regulation of viral genome replication"/>
    <property type="evidence" value="ECO:0007669"/>
    <property type="project" value="Ensembl"/>
</dbReference>
<dbReference type="GO" id="GO:0006979">
    <property type="term" value="P:response to oxidative stress"/>
    <property type="evidence" value="ECO:0000250"/>
    <property type="project" value="UniProtKB"/>
</dbReference>
<dbReference type="FunFam" id="1.10.150.40:FF:000001">
    <property type="entry name" value="Barrier-to-autointegration factor B"/>
    <property type="match status" value="1"/>
</dbReference>
<dbReference type="Gene3D" id="1.10.150.40">
    <property type="entry name" value="Barrier-to-autointegration factor, BAF"/>
    <property type="match status" value="1"/>
</dbReference>
<dbReference type="InterPro" id="IPR051387">
    <property type="entry name" value="BAF"/>
</dbReference>
<dbReference type="InterPro" id="IPR004122">
    <property type="entry name" value="BAF_prot"/>
</dbReference>
<dbReference type="InterPro" id="IPR036617">
    <property type="entry name" value="BAF_sf"/>
</dbReference>
<dbReference type="PANTHER" id="PTHR47507">
    <property type="entry name" value="BARRIER TO AUTOINTEGRATION FACTOR 2"/>
    <property type="match status" value="1"/>
</dbReference>
<dbReference type="PANTHER" id="PTHR47507:SF7">
    <property type="entry name" value="BARRIER-TO-AUTOINTEGRATION FACTOR"/>
    <property type="match status" value="1"/>
</dbReference>
<dbReference type="Pfam" id="PF02961">
    <property type="entry name" value="SAM_BAF"/>
    <property type="match status" value="1"/>
</dbReference>
<dbReference type="SMART" id="SM01023">
    <property type="entry name" value="BAF"/>
    <property type="match status" value="1"/>
</dbReference>
<dbReference type="SUPFAM" id="SSF47798">
    <property type="entry name" value="Barrier-to-autointegration factor, BAF"/>
    <property type="match status" value="1"/>
</dbReference>
<evidence type="ECO:0000250" key="1">
    <source>
        <dbReference type="UniProtKB" id="O75531"/>
    </source>
</evidence>
<evidence type="ECO:0000269" key="2">
    <source>
    </source>
</evidence>
<evidence type="ECO:0000303" key="3">
    <source>
    </source>
</evidence>
<evidence type="ECO:0000303" key="4">
    <source>
    </source>
</evidence>
<evidence type="ECO:0000305" key="5"/>
<evidence type="ECO:0000312" key="6">
    <source>
        <dbReference type="MGI" id="MGI:1346330"/>
    </source>
</evidence>
<protein>
    <recommendedName>
        <fullName evidence="4">Barrier-to-autointegration factor</fullName>
    </recommendedName>
    <alternativeName>
        <fullName evidence="3">LAP2-binding protein 1</fullName>
    </alternativeName>
    <component>
        <recommendedName>
            <fullName>Barrier-to-autointegration factor, N-terminally processed</fullName>
        </recommendedName>
    </component>
</protein>
<feature type="chain" id="PRO_0000423191" description="Barrier-to-autointegration factor">
    <location>
        <begin position="1"/>
        <end position="89"/>
    </location>
</feature>
<feature type="initiator methionine" description="Removed; alternate" evidence="1">
    <location>
        <position position="1"/>
    </location>
</feature>
<feature type="chain" id="PRO_0000221027" description="Barrier-to-autointegration factor, N-terminally processed">
    <location>
        <begin position="2"/>
        <end position="89"/>
    </location>
</feature>
<feature type="domain" description="HhH" evidence="1">
    <location>
        <begin position="20"/>
        <end position="35"/>
    </location>
</feature>
<feature type="modified residue" description="N-acetylmethionine" evidence="1">
    <location>
        <position position="1"/>
    </location>
</feature>
<feature type="modified residue" description="N-acetylthreonine; in Barrier-to-autointegration factor, N-terminally processed" evidence="1">
    <location>
        <position position="2"/>
    </location>
</feature>
<feature type="modified residue" description="Phosphothreonine; by VRK1 and VRK2" evidence="1">
    <location>
        <position position="2"/>
    </location>
</feature>
<feature type="modified residue" description="Phosphothreonine; by VRK1 and VRK2" evidence="1">
    <location>
        <position position="3"/>
    </location>
</feature>
<feature type="modified residue" description="Phosphoserine; by VRK1 and VRK2" evidence="1">
    <location>
        <position position="4"/>
    </location>
</feature>